<proteinExistence type="inferred from homology"/>
<keyword id="KW-0030">Aminoacyl-tRNA synthetase</keyword>
<keyword id="KW-0067">ATP-binding</keyword>
<keyword id="KW-0963">Cytoplasm</keyword>
<keyword id="KW-0436">Ligase</keyword>
<keyword id="KW-0460">Magnesium</keyword>
<keyword id="KW-0479">Metal-binding</keyword>
<keyword id="KW-0547">Nucleotide-binding</keyword>
<keyword id="KW-0648">Protein biosynthesis</keyword>
<gene>
    <name evidence="1" type="primary">pheS</name>
    <name type="ordered locus">XCV2791</name>
</gene>
<protein>
    <recommendedName>
        <fullName evidence="1">Phenylalanine--tRNA ligase alpha subunit</fullName>
        <ecNumber evidence="1">6.1.1.20</ecNumber>
    </recommendedName>
    <alternativeName>
        <fullName evidence="1">Phenylalanyl-tRNA synthetase alpha subunit</fullName>
        <shortName evidence="1">PheRS</shortName>
    </alternativeName>
</protein>
<accession>Q3BRU1</accession>
<comment type="catalytic activity">
    <reaction evidence="1">
        <text>tRNA(Phe) + L-phenylalanine + ATP = L-phenylalanyl-tRNA(Phe) + AMP + diphosphate + H(+)</text>
        <dbReference type="Rhea" id="RHEA:19413"/>
        <dbReference type="Rhea" id="RHEA-COMP:9668"/>
        <dbReference type="Rhea" id="RHEA-COMP:9699"/>
        <dbReference type="ChEBI" id="CHEBI:15378"/>
        <dbReference type="ChEBI" id="CHEBI:30616"/>
        <dbReference type="ChEBI" id="CHEBI:33019"/>
        <dbReference type="ChEBI" id="CHEBI:58095"/>
        <dbReference type="ChEBI" id="CHEBI:78442"/>
        <dbReference type="ChEBI" id="CHEBI:78531"/>
        <dbReference type="ChEBI" id="CHEBI:456215"/>
        <dbReference type="EC" id="6.1.1.20"/>
    </reaction>
</comment>
<comment type="cofactor">
    <cofactor evidence="1">
        <name>Mg(2+)</name>
        <dbReference type="ChEBI" id="CHEBI:18420"/>
    </cofactor>
    <text evidence="1">Binds 2 magnesium ions per tetramer.</text>
</comment>
<comment type="subunit">
    <text evidence="1">Tetramer of two alpha and two beta subunits.</text>
</comment>
<comment type="subcellular location">
    <subcellularLocation>
        <location evidence="1">Cytoplasm</location>
    </subcellularLocation>
</comment>
<comment type="similarity">
    <text evidence="1">Belongs to the class-II aminoacyl-tRNA synthetase family. Phe-tRNA synthetase alpha subunit type 1 subfamily.</text>
</comment>
<feature type="chain" id="PRO_0000232040" description="Phenylalanine--tRNA ligase alpha subunit">
    <location>
        <begin position="1"/>
        <end position="331"/>
    </location>
</feature>
<feature type="binding site" evidence="1">
    <location>
        <position position="252"/>
    </location>
    <ligand>
        <name>Mg(2+)</name>
        <dbReference type="ChEBI" id="CHEBI:18420"/>
        <note>shared with beta subunit</note>
    </ligand>
</feature>
<name>SYFA_XANE5</name>
<evidence type="ECO:0000255" key="1">
    <source>
        <dbReference type="HAMAP-Rule" id="MF_00281"/>
    </source>
</evidence>
<dbReference type="EC" id="6.1.1.20" evidence="1"/>
<dbReference type="EMBL" id="AM039952">
    <property type="protein sequence ID" value="CAJ24470.1"/>
    <property type="molecule type" value="Genomic_DNA"/>
</dbReference>
<dbReference type="RefSeq" id="WP_008574581.1">
    <property type="nucleotide sequence ID" value="NZ_CP017190.1"/>
</dbReference>
<dbReference type="SMR" id="Q3BRU1"/>
<dbReference type="STRING" id="456327.BJD11_08945"/>
<dbReference type="GeneID" id="93991836"/>
<dbReference type="KEGG" id="xcv:XCV2791"/>
<dbReference type="eggNOG" id="COG0016">
    <property type="taxonomic scope" value="Bacteria"/>
</dbReference>
<dbReference type="HOGENOM" id="CLU_025086_0_1_6"/>
<dbReference type="Proteomes" id="UP000007069">
    <property type="component" value="Chromosome"/>
</dbReference>
<dbReference type="GO" id="GO:0005737">
    <property type="term" value="C:cytoplasm"/>
    <property type="evidence" value="ECO:0007669"/>
    <property type="project" value="UniProtKB-SubCell"/>
</dbReference>
<dbReference type="GO" id="GO:0005524">
    <property type="term" value="F:ATP binding"/>
    <property type="evidence" value="ECO:0007669"/>
    <property type="project" value="UniProtKB-UniRule"/>
</dbReference>
<dbReference type="GO" id="GO:0000287">
    <property type="term" value="F:magnesium ion binding"/>
    <property type="evidence" value="ECO:0007669"/>
    <property type="project" value="UniProtKB-UniRule"/>
</dbReference>
<dbReference type="GO" id="GO:0004826">
    <property type="term" value="F:phenylalanine-tRNA ligase activity"/>
    <property type="evidence" value="ECO:0007669"/>
    <property type="project" value="UniProtKB-UniRule"/>
</dbReference>
<dbReference type="GO" id="GO:0000049">
    <property type="term" value="F:tRNA binding"/>
    <property type="evidence" value="ECO:0007669"/>
    <property type="project" value="InterPro"/>
</dbReference>
<dbReference type="GO" id="GO:0006432">
    <property type="term" value="P:phenylalanyl-tRNA aminoacylation"/>
    <property type="evidence" value="ECO:0007669"/>
    <property type="project" value="UniProtKB-UniRule"/>
</dbReference>
<dbReference type="CDD" id="cd00496">
    <property type="entry name" value="PheRS_alpha_core"/>
    <property type="match status" value="1"/>
</dbReference>
<dbReference type="FunFam" id="3.30.930.10:FF:000003">
    <property type="entry name" value="Phenylalanine--tRNA ligase alpha subunit"/>
    <property type="match status" value="1"/>
</dbReference>
<dbReference type="Gene3D" id="3.30.930.10">
    <property type="entry name" value="Bira Bifunctional Protein, Domain 2"/>
    <property type="match status" value="1"/>
</dbReference>
<dbReference type="HAMAP" id="MF_00281">
    <property type="entry name" value="Phe_tRNA_synth_alpha1"/>
    <property type="match status" value="1"/>
</dbReference>
<dbReference type="InterPro" id="IPR006195">
    <property type="entry name" value="aa-tRNA-synth_II"/>
</dbReference>
<dbReference type="InterPro" id="IPR045864">
    <property type="entry name" value="aa-tRNA-synth_II/BPL/LPL"/>
</dbReference>
<dbReference type="InterPro" id="IPR004529">
    <property type="entry name" value="Phe-tRNA-synth_IIc_asu"/>
</dbReference>
<dbReference type="InterPro" id="IPR004188">
    <property type="entry name" value="Phe-tRNA_ligase_II_N"/>
</dbReference>
<dbReference type="InterPro" id="IPR022911">
    <property type="entry name" value="Phe_tRNA_ligase_alpha1_bac"/>
</dbReference>
<dbReference type="InterPro" id="IPR002319">
    <property type="entry name" value="Phenylalanyl-tRNA_Synthase"/>
</dbReference>
<dbReference type="InterPro" id="IPR010978">
    <property type="entry name" value="tRNA-bd_arm"/>
</dbReference>
<dbReference type="NCBIfam" id="TIGR00468">
    <property type="entry name" value="pheS"/>
    <property type="match status" value="1"/>
</dbReference>
<dbReference type="PANTHER" id="PTHR11538:SF41">
    <property type="entry name" value="PHENYLALANINE--TRNA LIGASE, MITOCHONDRIAL"/>
    <property type="match status" value="1"/>
</dbReference>
<dbReference type="PANTHER" id="PTHR11538">
    <property type="entry name" value="PHENYLALANYL-TRNA SYNTHETASE"/>
    <property type="match status" value="1"/>
</dbReference>
<dbReference type="Pfam" id="PF02912">
    <property type="entry name" value="Phe_tRNA-synt_N"/>
    <property type="match status" value="1"/>
</dbReference>
<dbReference type="Pfam" id="PF01409">
    <property type="entry name" value="tRNA-synt_2d"/>
    <property type="match status" value="1"/>
</dbReference>
<dbReference type="SUPFAM" id="SSF55681">
    <property type="entry name" value="Class II aaRS and biotin synthetases"/>
    <property type="match status" value="1"/>
</dbReference>
<dbReference type="SUPFAM" id="SSF46589">
    <property type="entry name" value="tRNA-binding arm"/>
    <property type="match status" value="1"/>
</dbReference>
<dbReference type="PROSITE" id="PS50862">
    <property type="entry name" value="AA_TRNA_LIGASE_II"/>
    <property type="match status" value="1"/>
</dbReference>
<organism>
    <name type="scientific">Xanthomonas euvesicatoria pv. vesicatoria (strain 85-10)</name>
    <name type="common">Xanthomonas campestris pv. vesicatoria</name>
    <dbReference type="NCBI Taxonomy" id="316273"/>
    <lineage>
        <taxon>Bacteria</taxon>
        <taxon>Pseudomonadati</taxon>
        <taxon>Pseudomonadota</taxon>
        <taxon>Gammaproteobacteria</taxon>
        <taxon>Lysobacterales</taxon>
        <taxon>Lysobacteraceae</taxon>
        <taxon>Xanthomonas</taxon>
    </lineage>
</organism>
<sequence length="331" mass="37209">MSEIQSLTERALADVAAAQTPDQLEALRVALLGKSGSITAQLKQLGTLPAEQRKAAGEAINLSRDALTAALAERKHTLETAALDARLAGERIDVTLPGRRSERGGLHPVTRTLERIVEIFARLGYELSDGPEIEDDWHNFEALNFPPHHPARAMHDTFYFGDGRLLRTHTSGVQVRYMDAHKPPLRMIAAGKVYRSDSDQTHSPMFHQVEGLLVDEHSNFADLKGTLSEFVRAFFERDFEMRFRPSYFPFVEPGAEVDIAWQQPDGSTRWLEVLGCGMVHPNVLRSVGIDPERYTGFAFGLGVERFAMLRYGVNDLRAFFENDVRFLRQFA</sequence>
<reference key="1">
    <citation type="journal article" date="2005" name="J. Bacteriol.">
        <title>Insights into genome plasticity and pathogenicity of the plant pathogenic Bacterium Xanthomonas campestris pv. vesicatoria revealed by the complete genome sequence.</title>
        <authorList>
            <person name="Thieme F."/>
            <person name="Koebnik R."/>
            <person name="Bekel T."/>
            <person name="Berger C."/>
            <person name="Boch J."/>
            <person name="Buettner D."/>
            <person name="Caldana C."/>
            <person name="Gaigalat L."/>
            <person name="Goesmann A."/>
            <person name="Kay S."/>
            <person name="Kirchner O."/>
            <person name="Lanz C."/>
            <person name="Linke B."/>
            <person name="McHardy A.C."/>
            <person name="Meyer F."/>
            <person name="Mittenhuber G."/>
            <person name="Nies D.H."/>
            <person name="Niesbach-Kloesgen U."/>
            <person name="Patschkowski T."/>
            <person name="Rueckert C."/>
            <person name="Rupp O."/>
            <person name="Schneiker S."/>
            <person name="Schuster S.C."/>
            <person name="Vorhoelter F.J."/>
            <person name="Weber E."/>
            <person name="Puehler A."/>
            <person name="Bonas U."/>
            <person name="Bartels D."/>
            <person name="Kaiser O."/>
        </authorList>
    </citation>
    <scope>NUCLEOTIDE SEQUENCE [LARGE SCALE GENOMIC DNA]</scope>
    <source>
        <strain>85-10</strain>
    </source>
</reference>